<keyword id="KW-0963">Cytoplasm</keyword>
<keyword id="KW-0378">Hydrolase</keyword>
<keyword id="KW-1185">Reference proteome</keyword>
<keyword id="KW-0694">RNA-binding</keyword>
<keyword id="KW-0820">tRNA-binding</keyword>
<dbReference type="EC" id="3.1.1.96" evidence="1"/>
<dbReference type="EMBL" id="CP000377">
    <property type="protein sequence ID" value="ABF64552.1"/>
    <property type="molecule type" value="Genomic_DNA"/>
</dbReference>
<dbReference type="RefSeq" id="WP_011539147.1">
    <property type="nucleotide sequence ID" value="NC_008044.1"/>
</dbReference>
<dbReference type="SMR" id="Q1GFL4"/>
<dbReference type="STRING" id="292414.TM1040_1819"/>
<dbReference type="KEGG" id="sit:TM1040_1819"/>
<dbReference type="eggNOG" id="COG1490">
    <property type="taxonomic scope" value="Bacteria"/>
</dbReference>
<dbReference type="HOGENOM" id="CLU_076901_1_1_5"/>
<dbReference type="OrthoDB" id="9801395at2"/>
<dbReference type="Proteomes" id="UP000000636">
    <property type="component" value="Chromosome"/>
</dbReference>
<dbReference type="GO" id="GO:0005737">
    <property type="term" value="C:cytoplasm"/>
    <property type="evidence" value="ECO:0007669"/>
    <property type="project" value="UniProtKB-SubCell"/>
</dbReference>
<dbReference type="GO" id="GO:0051500">
    <property type="term" value="F:D-tyrosyl-tRNA(Tyr) deacylase activity"/>
    <property type="evidence" value="ECO:0007669"/>
    <property type="project" value="TreeGrafter"/>
</dbReference>
<dbReference type="GO" id="GO:0106026">
    <property type="term" value="F:Gly-tRNA(Ala) deacylase activity"/>
    <property type="evidence" value="ECO:0007669"/>
    <property type="project" value="UniProtKB-UniRule"/>
</dbReference>
<dbReference type="GO" id="GO:0043908">
    <property type="term" value="F:Ser(Gly)-tRNA(Ala) hydrolase activity"/>
    <property type="evidence" value="ECO:0007669"/>
    <property type="project" value="UniProtKB-UniRule"/>
</dbReference>
<dbReference type="GO" id="GO:0000049">
    <property type="term" value="F:tRNA binding"/>
    <property type="evidence" value="ECO:0007669"/>
    <property type="project" value="UniProtKB-UniRule"/>
</dbReference>
<dbReference type="GO" id="GO:0019478">
    <property type="term" value="P:D-amino acid catabolic process"/>
    <property type="evidence" value="ECO:0007669"/>
    <property type="project" value="UniProtKB-UniRule"/>
</dbReference>
<dbReference type="CDD" id="cd00563">
    <property type="entry name" value="Dtyr_deacylase"/>
    <property type="match status" value="1"/>
</dbReference>
<dbReference type="FunFam" id="3.50.80.10:FF:000001">
    <property type="entry name" value="D-aminoacyl-tRNA deacylase"/>
    <property type="match status" value="1"/>
</dbReference>
<dbReference type="Gene3D" id="3.50.80.10">
    <property type="entry name" value="D-tyrosyl-tRNA(Tyr) deacylase"/>
    <property type="match status" value="1"/>
</dbReference>
<dbReference type="HAMAP" id="MF_00518">
    <property type="entry name" value="Deacylase_Dtd"/>
    <property type="match status" value="1"/>
</dbReference>
<dbReference type="InterPro" id="IPR003732">
    <property type="entry name" value="Daa-tRNA_deacyls_DTD"/>
</dbReference>
<dbReference type="InterPro" id="IPR023509">
    <property type="entry name" value="DTD-like_sf"/>
</dbReference>
<dbReference type="NCBIfam" id="TIGR00256">
    <property type="entry name" value="D-aminoacyl-tRNA deacylase"/>
    <property type="match status" value="1"/>
</dbReference>
<dbReference type="PANTHER" id="PTHR10472:SF5">
    <property type="entry name" value="D-AMINOACYL-TRNA DEACYLASE 1"/>
    <property type="match status" value="1"/>
</dbReference>
<dbReference type="PANTHER" id="PTHR10472">
    <property type="entry name" value="D-TYROSYL-TRNA TYR DEACYLASE"/>
    <property type="match status" value="1"/>
</dbReference>
<dbReference type="Pfam" id="PF02580">
    <property type="entry name" value="Tyr_Deacylase"/>
    <property type="match status" value="1"/>
</dbReference>
<dbReference type="SUPFAM" id="SSF69500">
    <property type="entry name" value="DTD-like"/>
    <property type="match status" value="1"/>
</dbReference>
<organism>
    <name type="scientific">Ruegeria sp. (strain TM1040)</name>
    <name type="common">Silicibacter sp.</name>
    <dbReference type="NCBI Taxonomy" id="292414"/>
    <lineage>
        <taxon>Bacteria</taxon>
        <taxon>Pseudomonadati</taxon>
        <taxon>Pseudomonadota</taxon>
        <taxon>Alphaproteobacteria</taxon>
        <taxon>Rhodobacterales</taxon>
        <taxon>Roseobacteraceae</taxon>
        <taxon>Ruegeria</taxon>
    </lineage>
</organism>
<accession>Q1GFL4</accession>
<gene>
    <name evidence="1" type="primary">dtd</name>
    <name type="ordered locus">TM1040_1819</name>
</gene>
<protein>
    <recommendedName>
        <fullName evidence="1">D-aminoacyl-tRNA deacylase</fullName>
        <shortName evidence="1">DTD</shortName>
        <ecNumber evidence="1">3.1.1.96</ecNumber>
    </recommendedName>
    <alternativeName>
        <fullName evidence="1">Gly-tRNA(Ala) deacylase</fullName>
    </alternativeName>
</protein>
<sequence>MRALLQRVSAASVTVDNAVIGEIGPGLLVFVCAMRGDSEAEATQLVQKIARLRIFRDDAGKMNRSVSDTSGAVLVVSQFTLGADTRSGTRPGFSKAAAPDEGMRLYHCFCAKMRETGLTVQTGEFGADMKVSLVNDGPVTLWLDTDDRRNTSAGSG</sequence>
<evidence type="ECO:0000255" key="1">
    <source>
        <dbReference type="HAMAP-Rule" id="MF_00518"/>
    </source>
</evidence>
<comment type="function">
    <text evidence="1">An aminoacyl-tRNA editing enzyme that deacylates mischarged D-aminoacyl-tRNAs. Also deacylates mischarged glycyl-tRNA(Ala), protecting cells against glycine mischarging by AlaRS. Acts via tRNA-based rather than protein-based catalysis; rejects L-amino acids rather than detecting D-amino acids in the active site. By recycling D-aminoacyl-tRNA to D-amino acids and free tRNA molecules, this enzyme counteracts the toxicity associated with the formation of D-aminoacyl-tRNA entities in vivo and helps enforce protein L-homochirality.</text>
</comment>
<comment type="catalytic activity">
    <reaction evidence="1">
        <text>glycyl-tRNA(Ala) + H2O = tRNA(Ala) + glycine + H(+)</text>
        <dbReference type="Rhea" id="RHEA:53744"/>
        <dbReference type="Rhea" id="RHEA-COMP:9657"/>
        <dbReference type="Rhea" id="RHEA-COMP:13640"/>
        <dbReference type="ChEBI" id="CHEBI:15377"/>
        <dbReference type="ChEBI" id="CHEBI:15378"/>
        <dbReference type="ChEBI" id="CHEBI:57305"/>
        <dbReference type="ChEBI" id="CHEBI:78442"/>
        <dbReference type="ChEBI" id="CHEBI:78522"/>
        <dbReference type="EC" id="3.1.1.96"/>
    </reaction>
</comment>
<comment type="catalytic activity">
    <reaction evidence="1">
        <text>a D-aminoacyl-tRNA + H2O = a tRNA + a D-alpha-amino acid + H(+)</text>
        <dbReference type="Rhea" id="RHEA:13953"/>
        <dbReference type="Rhea" id="RHEA-COMP:10123"/>
        <dbReference type="Rhea" id="RHEA-COMP:10124"/>
        <dbReference type="ChEBI" id="CHEBI:15377"/>
        <dbReference type="ChEBI" id="CHEBI:15378"/>
        <dbReference type="ChEBI" id="CHEBI:59871"/>
        <dbReference type="ChEBI" id="CHEBI:78442"/>
        <dbReference type="ChEBI" id="CHEBI:79333"/>
        <dbReference type="EC" id="3.1.1.96"/>
    </reaction>
</comment>
<comment type="subunit">
    <text evidence="1">Homodimer.</text>
</comment>
<comment type="subcellular location">
    <subcellularLocation>
        <location evidence="1">Cytoplasm</location>
    </subcellularLocation>
</comment>
<comment type="domain">
    <text evidence="1">A Gly-cisPro motif from one monomer fits into the active site of the other monomer to allow specific chiral rejection of L-amino acids.</text>
</comment>
<comment type="similarity">
    <text evidence="1">Belongs to the DTD family.</text>
</comment>
<feature type="chain" id="PRO_0000259314" description="D-aminoacyl-tRNA deacylase">
    <location>
        <begin position="1"/>
        <end position="156"/>
    </location>
</feature>
<feature type="short sequence motif" description="Gly-cisPro motif, important for rejection of L-amino acids" evidence="1">
    <location>
        <begin position="137"/>
        <end position="138"/>
    </location>
</feature>
<proteinExistence type="inferred from homology"/>
<name>DTD_RUEST</name>
<reference key="1">
    <citation type="submission" date="2006-05" db="EMBL/GenBank/DDBJ databases">
        <title>Complete sequence of chromosome of Silicibacter sp. TM1040.</title>
        <authorList>
            <consortium name="US DOE Joint Genome Institute"/>
            <person name="Copeland A."/>
            <person name="Lucas S."/>
            <person name="Lapidus A."/>
            <person name="Barry K."/>
            <person name="Detter J.C."/>
            <person name="Glavina del Rio T."/>
            <person name="Hammon N."/>
            <person name="Israni S."/>
            <person name="Dalin E."/>
            <person name="Tice H."/>
            <person name="Pitluck S."/>
            <person name="Brettin T."/>
            <person name="Bruce D."/>
            <person name="Han C."/>
            <person name="Tapia R."/>
            <person name="Goodwin L."/>
            <person name="Thompson L.S."/>
            <person name="Gilna P."/>
            <person name="Schmutz J."/>
            <person name="Larimer F."/>
            <person name="Land M."/>
            <person name="Hauser L."/>
            <person name="Kyrpides N."/>
            <person name="Kim E."/>
            <person name="Belas R."/>
            <person name="Moran M.A."/>
            <person name="Buchan A."/>
            <person name="Gonzalez J.M."/>
            <person name="Schell M.A."/>
            <person name="Sun F."/>
            <person name="Richardson P."/>
        </authorList>
    </citation>
    <scope>NUCLEOTIDE SEQUENCE [LARGE SCALE GENOMIC DNA]</scope>
    <source>
        <strain>TM1040</strain>
    </source>
</reference>